<keyword id="KW-0004">4Fe-4S</keyword>
<keyword id="KW-0963">Cytoplasm</keyword>
<keyword id="KW-1015">Disulfide bond</keyword>
<keyword id="KW-0408">Iron</keyword>
<keyword id="KW-0411">Iron-sulfur</keyword>
<keyword id="KW-0479">Metal-binding</keyword>
<keyword id="KW-0489">Methyltransferase</keyword>
<keyword id="KW-0698">rRNA processing</keyword>
<keyword id="KW-0949">S-adenosyl-L-methionine</keyword>
<keyword id="KW-0808">Transferase</keyword>
<keyword id="KW-0819">tRNA processing</keyword>
<gene>
    <name evidence="1" type="primary">rlmN</name>
    <name type="ordered locus">CLI_2567</name>
</gene>
<proteinExistence type="inferred from homology"/>
<sequence>MENILDFTLEELKEWLISKEEKAFRAKQVFDWIYNKLIFDFNNMKNIPYKTKNLLSDNFYVGVPKVVKKLMSQDKNTYKFLFEYKDGNIIESVVMKYKHGNSICVSTQVGCRMGCKFCASTLDGVIRNLTSGEILSQIMAAQKEIGERISNVVLMGSGEPLDNFQNVTKFLDLVTSDTTLNIGQRHITLSTCGIVPKIKELADKNYNITLAISLHSPEDLLRKEMMPIANKYSIKELMEACDYYINKTNRRITFEYALVKGKNDSIKEAKKLSTVLKGKLCHVNLIPVNEIKENSYEKSTLKNIESFGNILKENGIETTIRREMGADINAACGQLRRSYVSK</sequence>
<protein>
    <recommendedName>
        <fullName evidence="1">Probable dual-specificity RNA methyltransferase RlmN</fullName>
        <ecNumber evidence="1">2.1.1.192</ecNumber>
    </recommendedName>
    <alternativeName>
        <fullName evidence="1">23S rRNA (adenine(2503)-C(2))-methyltransferase</fullName>
    </alternativeName>
    <alternativeName>
        <fullName evidence="1">23S rRNA m2A2503 methyltransferase</fullName>
    </alternativeName>
    <alternativeName>
        <fullName evidence="1">Ribosomal RNA large subunit methyltransferase N</fullName>
    </alternativeName>
    <alternativeName>
        <fullName evidence="1">tRNA (adenine(37)-C(2))-methyltransferase</fullName>
    </alternativeName>
    <alternativeName>
        <fullName evidence="1">tRNA m2A37 methyltransferase</fullName>
    </alternativeName>
</protein>
<name>RLMN_CLOBL</name>
<accession>A7GG92</accession>
<comment type="function">
    <text evidence="1">Specifically methylates position 2 of adenine 2503 in 23S rRNA and position 2 of adenine 37 in tRNAs.</text>
</comment>
<comment type="catalytic activity">
    <reaction evidence="1">
        <text>adenosine(2503) in 23S rRNA + 2 reduced [2Fe-2S]-[ferredoxin] + 2 S-adenosyl-L-methionine = 2-methyladenosine(2503) in 23S rRNA + 5'-deoxyadenosine + L-methionine + 2 oxidized [2Fe-2S]-[ferredoxin] + S-adenosyl-L-homocysteine</text>
        <dbReference type="Rhea" id="RHEA:42916"/>
        <dbReference type="Rhea" id="RHEA-COMP:10000"/>
        <dbReference type="Rhea" id="RHEA-COMP:10001"/>
        <dbReference type="Rhea" id="RHEA-COMP:10152"/>
        <dbReference type="Rhea" id="RHEA-COMP:10282"/>
        <dbReference type="ChEBI" id="CHEBI:17319"/>
        <dbReference type="ChEBI" id="CHEBI:33737"/>
        <dbReference type="ChEBI" id="CHEBI:33738"/>
        <dbReference type="ChEBI" id="CHEBI:57844"/>
        <dbReference type="ChEBI" id="CHEBI:57856"/>
        <dbReference type="ChEBI" id="CHEBI:59789"/>
        <dbReference type="ChEBI" id="CHEBI:74411"/>
        <dbReference type="ChEBI" id="CHEBI:74497"/>
        <dbReference type="EC" id="2.1.1.192"/>
    </reaction>
</comment>
<comment type="catalytic activity">
    <reaction evidence="1">
        <text>adenosine(37) in tRNA + 2 reduced [2Fe-2S]-[ferredoxin] + 2 S-adenosyl-L-methionine = 2-methyladenosine(37) in tRNA + 5'-deoxyadenosine + L-methionine + 2 oxidized [2Fe-2S]-[ferredoxin] + S-adenosyl-L-homocysteine</text>
        <dbReference type="Rhea" id="RHEA:43332"/>
        <dbReference type="Rhea" id="RHEA-COMP:10000"/>
        <dbReference type="Rhea" id="RHEA-COMP:10001"/>
        <dbReference type="Rhea" id="RHEA-COMP:10162"/>
        <dbReference type="Rhea" id="RHEA-COMP:10485"/>
        <dbReference type="ChEBI" id="CHEBI:17319"/>
        <dbReference type="ChEBI" id="CHEBI:33737"/>
        <dbReference type="ChEBI" id="CHEBI:33738"/>
        <dbReference type="ChEBI" id="CHEBI:57844"/>
        <dbReference type="ChEBI" id="CHEBI:57856"/>
        <dbReference type="ChEBI" id="CHEBI:59789"/>
        <dbReference type="ChEBI" id="CHEBI:74411"/>
        <dbReference type="ChEBI" id="CHEBI:74497"/>
        <dbReference type="EC" id="2.1.1.192"/>
    </reaction>
</comment>
<comment type="cofactor">
    <cofactor evidence="1">
        <name>[4Fe-4S] cluster</name>
        <dbReference type="ChEBI" id="CHEBI:49883"/>
    </cofactor>
    <text evidence="1">Binds 1 [4Fe-4S] cluster. The cluster is coordinated with 3 cysteines and an exchangeable S-adenosyl-L-methionine.</text>
</comment>
<comment type="subcellular location">
    <subcellularLocation>
        <location evidence="1">Cytoplasm</location>
    </subcellularLocation>
</comment>
<comment type="miscellaneous">
    <text evidence="1">Reaction proceeds by a ping-pong mechanism involving intermediate methylation of a conserved cysteine residue.</text>
</comment>
<comment type="similarity">
    <text evidence="1">Belongs to the radical SAM superfamily. RlmN family.</text>
</comment>
<feature type="chain" id="PRO_0000350118" description="Probable dual-specificity RNA methyltransferase RlmN">
    <location>
        <begin position="1"/>
        <end position="342"/>
    </location>
</feature>
<feature type="domain" description="Radical SAM core" evidence="2">
    <location>
        <begin position="97"/>
        <end position="327"/>
    </location>
</feature>
<feature type="active site" description="Proton acceptor" evidence="1">
    <location>
        <position position="91"/>
    </location>
</feature>
<feature type="active site" description="S-methylcysteine intermediate" evidence="1">
    <location>
        <position position="332"/>
    </location>
</feature>
<feature type="binding site" evidence="1">
    <location>
        <position position="111"/>
    </location>
    <ligand>
        <name>[4Fe-4S] cluster</name>
        <dbReference type="ChEBI" id="CHEBI:49883"/>
        <note>4Fe-4S-S-AdoMet</note>
    </ligand>
</feature>
<feature type="binding site" evidence="1">
    <location>
        <position position="115"/>
    </location>
    <ligand>
        <name>[4Fe-4S] cluster</name>
        <dbReference type="ChEBI" id="CHEBI:49883"/>
        <note>4Fe-4S-S-AdoMet</note>
    </ligand>
</feature>
<feature type="binding site" evidence="1">
    <location>
        <position position="118"/>
    </location>
    <ligand>
        <name>[4Fe-4S] cluster</name>
        <dbReference type="ChEBI" id="CHEBI:49883"/>
        <note>4Fe-4S-S-AdoMet</note>
    </ligand>
</feature>
<feature type="binding site" evidence="1">
    <location>
        <begin position="158"/>
        <end position="159"/>
    </location>
    <ligand>
        <name>S-adenosyl-L-methionine</name>
        <dbReference type="ChEBI" id="CHEBI:59789"/>
    </ligand>
</feature>
<feature type="binding site" evidence="1">
    <location>
        <position position="190"/>
    </location>
    <ligand>
        <name>S-adenosyl-L-methionine</name>
        <dbReference type="ChEBI" id="CHEBI:59789"/>
    </ligand>
</feature>
<feature type="binding site" evidence="1">
    <location>
        <begin position="213"/>
        <end position="215"/>
    </location>
    <ligand>
        <name>S-adenosyl-L-methionine</name>
        <dbReference type="ChEBI" id="CHEBI:59789"/>
    </ligand>
</feature>
<feature type="binding site" evidence="1">
    <location>
        <position position="289"/>
    </location>
    <ligand>
        <name>S-adenosyl-L-methionine</name>
        <dbReference type="ChEBI" id="CHEBI:59789"/>
    </ligand>
</feature>
<feature type="disulfide bond" description="(transient)" evidence="1">
    <location>
        <begin position="104"/>
        <end position="332"/>
    </location>
</feature>
<evidence type="ECO:0000255" key="1">
    <source>
        <dbReference type="HAMAP-Rule" id="MF_01849"/>
    </source>
</evidence>
<evidence type="ECO:0000255" key="2">
    <source>
        <dbReference type="PROSITE-ProRule" id="PRU01266"/>
    </source>
</evidence>
<organism>
    <name type="scientific">Clostridium botulinum (strain Langeland / NCTC 10281 / Type F)</name>
    <dbReference type="NCBI Taxonomy" id="441772"/>
    <lineage>
        <taxon>Bacteria</taxon>
        <taxon>Bacillati</taxon>
        <taxon>Bacillota</taxon>
        <taxon>Clostridia</taxon>
        <taxon>Eubacteriales</taxon>
        <taxon>Clostridiaceae</taxon>
        <taxon>Clostridium</taxon>
    </lineage>
</organism>
<reference key="1">
    <citation type="submission" date="2007-06" db="EMBL/GenBank/DDBJ databases">
        <authorList>
            <person name="Brinkac L.M."/>
            <person name="Daugherty S."/>
            <person name="Dodson R.J."/>
            <person name="Madupu R."/>
            <person name="Brown J.L."/>
            <person name="Bruce D."/>
            <person name="Detter C."/>
            <person name="Munk C."/>
            <person name="Smith L.A."/>
            <person name="Smith T.J."/>
            <person name="White O."/>
            <person name="Brettin T.S."/>
        </authorList>
    </citation>
    <scope>NUCLEOTIDE SEQUENCE [LARGE SCALE GENOMIC DNA]</scope>
    <source>
        <strain>Langeland / NCTC 10281 / Type F</strain>
    </source>
</reference>
<dbReference type="EC" id="2.1.1.192" evidence="1"/>
<dbReference type="EMBL" id="CP000728">
    <property type="protein sequence ID" value="ABS40908.1"/>
    <property type="molecule type" value="Genomic_DNA"/>
</dbReference>
<dbReference type="RefSeq" id="WP_012100423.1">
    <property type="nucleotide sequence ID" value="NC_009699.1"/>
</dbReference>
<dbReference type="SMR" id="A7GG92"/>
<dbReference type="KEGG" id="cbf:CLI_2567"/>
<dbReference type="HOGENOM" id="CLU_029101_0_1_9"/>
<dbReference type="Proteomes" id="UP000002410">
    <property type="component" value="Chromosome"/>
</dbReference>
<dbReference type="GO" id="GO:0005737">
    <property type="term" value="C:cytoplasm"/>
    <property type="evidence" value="ECO:0007669"/>
    <property type="project" value="UniProtKB-SubCell"/>
</dbReference>
<dbReference type="GO" id="GO:0051539">
    <property type="term" value="F:4 iron, 4 sulfur cluster binding"/>
    <property type="evidence" value="ECO:0007669"/>
    <property type="project" value="UniProtKB-UniRule"/>
</dbReference>
<dbReference type="GO" id="GO:0046872">
    <property type="term" value="F:metal ion binding"/>
    <property type="evidence" value="ECO:0007669"/>
    <property type="project" value="UniProtKB-KW"/>
</dbReference>
<dbReference type="GO" id="GO:0070040">
    <property type="term" value="F:rRNA (adenine(2503)-C2-)-methyltransferase activity"/>
    <property type="evidence" value="ECO:0007669"/>
    <property type="project" value="UniProtKB-UniRule"/>
</dbReference>
<dbReference type="GO" id="GO:0019843">
    <property type="term" value="F:rRNA binding"/>
    <property type="evidence" value="ECO:0007669"/>
    <property type="project" value="UniProtKB-UniRule"/>
</dbReference>
<dbReference type="GO" id="GO:0002935">
    <property type="term" value="F:tRNA (adenine(37)-C2)-methyltransferase activity"/>
    <property type="evidence" value="ECO:0007669"/>
    <property type="project" value="UniProtKB-UniRule"/>
</dbReference>
<dbReference type="GO" id="GO:0000049">
    <property type="term" value="F:tRNA binding"/>
    <property type="evidence" value="ECO:0007669"/>
    <property type="project" value="UniProtKB-UniRule"/>
</dbReference>
<dbReference type="GO" id="GO:0070475">
    <property type="term" value="P:rRNA base methylation"/>
    <property type="evidence" value="ECO:0007669"/>
    <property type="project" value="UniProtKB-UniRule"/>
</dbReference>
<dbReference type="GO" id="GO:0030488">
    <property type="term" value="P:tRNA methylation"/>
    <property type="evidence" value="ECO:0007669"/>
    <property type="project" value="UniProtKB-UniRule"/>
</dbReference>
<dbReference type="CDD" id="cd01335">
    <property type="entry name" value="Radical_SAM"/>
    <property type="match status" value="1"/>
</dbReference>
<dbReference type="FunFam" id="3.20.20.70:FF:000014">
    <property type="entry name" value="Probable dual-specificity RNA methyltransferase RlmN"/>
    <property type="match status" value="1"/>
</dbReference>
<dbReference type="Gene3D" id="1.10.150.530">
    <property type="match status" value="1"/>
</dbReference>
<dbReference type="Gene3D" id="3.20.20.70">
    <property type="entry name" value="Aldolase class I"/>
    <property type="match status" value="1"/>
</dbReference>
<dbReference type="HAMAP" id="MF_01849">
    <property type="entry name" value="RNA_methyltr_RlmN"/>
    <property type="match status" value="1"/>
</dbReference>
<dbReference type="InterPro" id="IPR013785">
    <property type="entry name" value="Aldolase_TIM"/>
</dbReference>
<dbReference type="InterPro" id="IPR040072">
    <property type="entry name" value="Methyltransferase_A"/>
</dbReference>
<dbReference type="InterPro" id="IPR048641">
    <property type="entry name" value="RlmN_N"/>
</dbReference>
<dbReference type="InterPro" id="IPR027492">
    <property type="entry name" value="RNA_MTrfase_RlmN"/>
</dbReference>
<dbReference type="InterPro" id="IPR004383">
    <property type="entry name" value="rRNA_lsu_MTrfase_RlmN/Cfr"/>
</dbReference>
<dbReference type="InterPro" id="IPR007197">
    <property type="entry name" value="rSAM"/>
</dbReference>
<dbReference type="NCBIfam" id="TIGR00048">
    <property type="entry name" value="rRNA_mod_RlmN"/>
    <property type="match status" value="1"/>
</dbReference>
<dbReference type="PANTHER" id="PTHR30544">
    <property type="entry name" value="23S RRNA METHYLTRANSFERASE"/>
    <property type="match status" value="1"/>
</dbReference>
<dbReference type="PANTHER" id="PTHR30544:SF5">
    <property type="entry name" value="RADICAL SAM CORE DOMAIN-CONTAINING PROTEIN"/>
    <property type="match status" value="1"/>
</dbReference>
<dbReference type="Pfam" id="PF04055">
    <property type="entry name" value="Radical_SAM"/>
    <property type="match status" value="1"/>
</dbReference>
<dbReference type="Pfam" id="PF21016">
    <property type="entry name" value="RlmN_N"/>
    <property type="match status" value="1"/>
</dbReference>
<dbReference type="PIRSF" id="PIRSF006004">
    <property type="entry name" value="CHP00048"/>
    <property type="match status" value="1"/>
</dbReference>
<dbReference type="SFLD" id="SFLDF00275">
    <property type="entry name" value="adenosine_C2_methyltransferase"/>
    <property type="match status" value="1"/>
</dbReference>
<dbReference type="SFLD" id="SFLDG01062">
    <property type="entry name" value="methyltransferase_(Class_A)"/>
    <property type="match status" value="1"/>
</dbReference>
<dbReference type="SUPFAM" id="SSF102114">
    <property type="entry name" value="Radical SAM enzymes"/>
    <property type="match status" value="1"/>
</dbReference>
<dbReference type="PROSITE" id="PS51918">
    <property type="entry name" value="RADICAL_SAM"/>
    <property type="match status" value="1"/>
</dbReference>